<gene>
    <name type="primary">EAF3</name>
    <name type="ordered locus">CAALFM_C208280WA</name>
    <name type="ORF">CaO19.2660</name>
</gene>
<accession>Q59K07</accession>
<accession>A0A1D8PI46</accession>
<dbReference type="EMBL" id="CP017624">
    <property type="protein sequence ID" value="AOW27819.1"/>
    <property type="molecule type" value="Genomic_DNA"/>
</dbReference>
<dbReference type="RefSeq" id="XP_710085.1">
    <property type="nucleotide sequence ID" value="XM_704993.1"/>
</dbReference>
<dbReference type="SMR" id="Q59K07"/>
<dbReference type="BioGRID" id="1231411">
    <property type="interactions" value="1"/>
</dbReference>
<dbReference type="FunCoup" id="Q59K07">
    <property type="interactions" value="720"/>
</dbReference>
<dbReference type="STRING" id="237561.Q59K07"/>
<dbReference type="EnsemblFungi" id="C2_08280W_A-T">
    <property type="protein sequence ID" value="C2_08280W_A-T-p1"/>
    <property type="gene ID" value="C2_08280W_A"/>
</dbReference>
<dbReference type="GeneID" id="3648318"/>
<dbReference type="KEGG" id="cal:CAALFM_C208280WA"/>
<dbReference type="CGD" id="CAL0000193590">
    <property type="gene designation" value="EAF3"/>
</dbReference>
<dbReference type="VEuPathDB" id="FungiDB:C2_08280W_A"/>
<dbReference type="eggNOG" id="KOG3001">
    <property type="taxonomic scope" value="Eukaryota"/>
</dbReference>
<dbReference type="HOGENOM" id="CLU_039566_1_1_1"/>
<dbReference type="InParanoid" id="Q59K07"/>
<dbReference type="OMA" id="HKFFDIE"/>
<dbReference type="OrthoDB" id="124855at2759"/>
<dbReference type="Proteomes" id="UP000000559">
    <property type="component" value="Chromosome 2"/>
</dbReference>
<dbReference type="GO" id="GO:0035267">
    <property type="term" value="C:NuA4 histone acetyltransferase complex"/>
    <property type="evidence" value="ECO:0000314"/>
    <property type="project" value="CGD"/>
</dbReference>
<dbReference type="GO" id="GO:1990453">
    <property type="term" value="C:nucleosome disassembly/reassembly complex"/>
    <property type="evidence" value="ECO:0007669"/>
    <property type="project" value="EnsemblFungi"/>
</dbReference>
<dbReference type="GO" id="GO:0032221">
    <property type="term" value="C:Rpd3S complex"/>
    <property type="evidence" value="ECO:0000318"/>
    <property type="project" value="GO_Central"/>
</dbReference>
<dbReference type="GO" id="GO:0140566">
    <property type="term" value="F:histone reader activity"/>
    <property type="evidence" value="ECO:0007669"/>
    <property type="project" value="EnsemblFungi"/>
</dbReference>
<dbReference type="GO" id="GO:0035064">
    <property type="term" value="F:methylated histone binding"/>
    <property type="evidence" value="ECO:0007669"/>
    <property type="project" value="EnsemblFungi"/>
</dbReference>
<dbReference type="GO" id="GO:0006281">
    <property type="term" value="P:DNA repair"/>
    <property type="evidence" value="ECO:0007669"/>
    <property type="project" value="UniProtKB-KW"/>
</dbReference>
<dbReference type="GO" id="GO:0006335">
    <property type="term" value="P:DNA replication-dependent chromatin assembly"/>
    <property type="evidence" value="ECO:0007669"/>
    <property type="project" value="EnsemblFungi"/>
</dbReference>
<dbReference type="GO" id="GO:0060195">
    <property type="term" value="P:negative regulation of antisense RNA transcription"/>
    <property type="evidence" value="ECO:0007669"/>
    <property type="project" value="EnsemblFungi"/>
</dbReference>
<dbReference type="GO" id="GO:0006337">
    <property type="term" value="P:nucleosome disassembly"/>
    <property type="evidence" value="ECO:0007669"/>
    <property type="project" value="EnsemblFungi"/>
</dbReference>
<dbReference type="GO" id="GO:0032968">
    <property type="term" value="P:positive regulation of transcription elongation by RNA polymerase II"/>
    <property type="evidence" value="ECO:0007669"/>
    <property type="project" value="EnsemblFungi"/>
</dbReference>
<dbReference type="GO" id="GO:0030174">
    <property type="term" value="P:regulation of DNA-templated DNA replication initiation"/>
    <property type="evidence" value="ECO:0007669"/>
    <property type="project" value="EnsemblFungi"/>
</dbReference>
<dbReference type="GO" id="GO:0043487">
    <property type="term" value="P:regulation of RNA stability"/>
    <property type="evidence" value="ECO:0007669"/>
    <property type="project" value="EnsemblFungi"/>
</dbReference>
<dbReference type="GO" id="GO:0006368">
    <property type="term" value="P:transcription elongation by RNA polymerase II"/>
    <property type="evidence" value="ECO:0007669"/>
    <property type="project" value="EnsemblFungi"/>
</dbReference>
<dbReference type="FunFam" id="1.10.274.30:FF:000012">
    <property type="entry name" value="Chromatin modification-related protein EAF3"/>
    <property type="match status" value="1"/>
</dbReference>
<dbReference type="Gene3D" id="2.30.30.140">
    <property type="match status" value="1"/>
</dbReference>
<dbReference type="Gene3D" id="1.10.274.30">
    <property type="entry name" value="MRG domain"/>
    <property type="match status" value="1"/>
</dbReference>
<dbReference type="InterPro" id="IPR016197">
    <property type="entry name" value="Chromo-like_dom_sf"/>
</dbReference>
<dbReference type="InterPro" id="IPR008676">
    <property type="entry name" value="MRG"/>
</dbReference>
<dbReference type="InterPro" id="IPR038217">
    <property type="entry name" value="MRG_C_sf"/>
</dbReference>
<dbReference type="InterPro" id="IPR026541">
    <property type="entry name" value="MRG_dom"/>
</dbReference>
<dbReference type="InterPro" id="IPR053820">
    <property type="entry name" value="MSL3_chromo-like"/>
</dbReference>
<dbReference type="PANTHER" id="PTHR10880">
    <property type="entry name" value="MORTALITY FACTOR 4-LIKE PROTEIN"/>
    <property type="match status" value="1"/>
</dbReference>
<dbReference type="PANTHER" id="PTHR10880:SF15">
    <property type="entry name" value="MSL COMPLEX SUBUNIT 3"/>
    <property type="match status" value="1"/>
</dbReference>
<dbReference type="Pfam" id="PF05712">
    <property type="entry name" value="MRG"/>
    <property type="match status" value="1"/>
</dbReference>
<dbReference type="Pfam" id="PF22732">
    <property type="entry name" value="MSL3_chromo-like"/>
    <property type="match status" value="1"/>
</dbReference>
<dbReference type="PIRSF" id="PIRSF038133">
    <property type="entry name" value="HAT_Nua4_EAF3/MRG15"/>
    <property type="match status" value="1"/>
</dbReference>
<dbReference type="SUPFAM" id="SSF54160">
    <property type="entry name" value="Chromo domain-like"/>
    <property type="match status" value="1"/>
</dbReference>
<dbReference type="PROSITE" id="PS51640">
    <property type="entry name" value="MRG"/>
    <property type="match status" value="1"/>
</dbReference>
<organism>
    <name type="scientific">Candida albicans (strain SC5314 / ATCC MYA-2876)</name>
    <name type="common">Yeast</name>
    <dbReference type="NCBI Taxonomy" id="237561"/>
    <lineage>
        <taxon>Eukaryota</taxon>
        <taxon>Fungi</taxon>
        <taxon>Dikarya</taxon>
        <taxon>Ascomycota</taxon>
        <taxon>Saccharomycotina</taxon>
        <taxon>Pichiomycetes</taxon>
        <taxon>Debaryomycetaceae</taxon>
        <taxon>Candida/Lodderomyces clade</taxon>
        <taxon>Candida</taxon>
    </lineage>
</organism>
<name>EAF3_CANAL</name>
<keyword id="KW-0156">Chromatin regulator</keyword>
<keyword id="KW-0227">DNA damage</keyword>
<keyword id="KW-0234">DNA repair</keyword>
<keyword id="KW-0539">Nucleus</keyword>
<keyword id="KW-1185">Reference proteome</keyword>
<keyword id="KW-0804">Transcription</keyword>
<keyword id="KW-0805">Transcription regulation</keyword>
<comment type="function">
    <text evidence="1">Involved in deacetylation of histones, chromatin assembly and chromosome segregation. May act as a transcriptional oscillator, directing histone deacetylases to specific chromosomal domains. Component of the NuA4 histone acetyltransferase complex which is involved in transcriptional activation of selected genes principally by acetylation of nucleosomal histone H4 and H2A. The NuA4 complex is also involved in DNA repair (By similarity).</text>
</comment>
<comment type="subunit">
    <text evidence="1">Component of the NuA4 histone acetyltransferase complex.</text>
</comment>
<comment type="subcellular location">
    <subcellularLocation>
        <location evidence="3">Nucleus</location>
    </subcellularLocation>
</comment>
<comment type="similarity">
    <text evidence="5">Belongs to the MRG family.</text>
</comment>
<proteinExistence type="inferred from homology"/>
<feature type="chain" id="PRO_0000088774" description="Chromatin modification-related protein EAF3">
    <location>
        <begin position="1"/>
        <end position="369"/>
    </location>
</feature>
<feature type="domain" description="Tudor-knot" evidence="2">
    <location>
        <begin position="9"/>
        <end position="97"/>
    </location>
</feature>
<feature type="domain" description="MRG" evidence="3">
    <location>
        <begin position="193"/>
        <end position="368"/>
    </location>
</feature>
<feature type="region of interest" description="Disordered" evidence="4">
    <location>
        <begin position="43"/>
        <end position="66"/>
    </location>
</feature>
<feature type="region of interest" description="Disordered" evidence="4">
    <location>
        <begin position="126"/>
        <end position="191"/>
    </location>
</feature>
<feature type="compositionally biased region" description="Basic residues" evidence="4">
    <location>
        <begin position="53"/>
        <end position="62"/>
    </location>
</feature>
<feature type="compositionally biased region" description="Low complexity" evidence="4">
    <location>
        <begin position="126"/>
        <end position="135"/>
    </location>
</feature>
<feature type="compositionally biased region" description="Basic residues" evidence="4">
    <location>
        <begin position="136"/>
        <end position="149"/>
    </location>
</feature>
<feature type="compositionally biased region" description="Low complexity" evidence="4">
    <location>
        <begin position="150"/>
        <end position="191"/>
    </location>
</feature>
<reference key="1">
    <citation type="journal article" date="2004" name="Proc. Natl. Acad. Sci. U.S.A.">
        <title>The diploid genome sequence of Candida albicans.</title>
        <authorList>
            <person name="Jones T."/>
            <person name="Federspiel N.A."/>
            <person name="Chibana H."/>
            <person name="Dungan J."/>
            <person name="Kalman S."/>
            <person name="Magee B.B."/>
            <person name="Newport G."/>
            <person name="Thorstenson Y.R."/>
            <person name="Agabian N."/>
            <person name="Magee P.T."/>
            <person name="Davis R.W."/>
            <person name="Scherer S."/>
        </authorList>
    </citation>
    <scope>NUCLEOTIDE SEQUENCE [LARGE SCALE GENOMIC DNA]</scope>
    <source>
        <strain>SC5314 / ATCC MYA-2876</strain>
    </source>
</reference>
<reference key="2">
    <citation type="journal article" date="2007" name="Genome Biol.">
        <title>Assembly of the Candida albicans genome into sixteen supercontigs aligned on the eight chromosomes.</title>
        <authorList>
            <person name="van het Hoog M."/>
            <person name="Rast T.J."/>
            <person name="Martchenko M."/>
            <person name="Grindle S."/>
            <person name="Dignard D."/>
            <person name="Hogues H."/>
            <person name="Cuomo C."/>
            <person name="Berriman M."/>
            <person name="Scherer S."/>
            <person name="Magee B.B."/>
            <person name="Whiteway M."/>
            <person name="Chibana H."/>
            <person name="Nantel A."/>
            <person name="Magee P.T."/>
        </authorList>
    </citation>
    <scope>GENOME REANNOTATION</scope>
    <source>
        <strain>SC5314 / ATCC MYA-2876</strain>
    </source>
</reference>
<reference key="3">
    <citation type="journal article" date="2013" name="Genome Biol.">
        <title>Assembly of a phased diploid Candida albicans genome facilitates allele-specific measurements and provides a simple model for repeat and indel structure.</title>
        <authorList>
            <person name="Muzzey D."/>
            <person name="Schwartz K."/>
            <person name="Weissman J.S."/>
            <person name="Sherlock G."/>
        </authorList>
    </citation>
    <scope>NUCLEOTIDE SEQUENCE [LARGE SCALE GENOMIC DNA]</scope>
    <scope>GENOME REANNOTATION</scope>
    <source>
        <strain>SC5314 / ATCC MYA-2876</strain>
    </source>
</reference>
<evidence type="ECO:0000250" key="1"/>
<evidence type="ECO:0000255" key="2"/>
<evidence type="ECO:0000255" key="3">
    <source>
        <dbReference type="PROSITE-ProRule" id="PRU00972"/>
    </source>
</evidence>
<evidence type="ECO:0000256" key="4">
    <source>
        <dbReference type="SAM" id="MobiDB-lite"/>
    </source>
</evidence>
<evidence type="ECO:0000305" key="5"/>
<protein>
    <recommendedName>
        <fullName>Chromatin modification-related protein EAF3</fullName>
    </recommendedName>
</protein>
<sequence length="369" mass="42810">MVEYKPNQTVYAYHGPLIYEAKILKLKNGKDSFIINQDFQHEPLEEKPNSSGNHHHHHHSQHIAKFDPKKWQDQTCYYLHYQGWNSKWDEWVGIDRIMEYNEENKFKKLELDQLTKKKKAINNNEIIVNATTKNHTNNKNKKESNKRKSSSATTTSGVTAGTNNNKKQKSASTSTTNNTSGNSGTTSNKSKQILSRLNLNFPPELKHILVNDWEYITKDRKLVSLPSQYPINQILQDYKTYRTKQLTSNSDQLSILIEILTGLEIYFNKSLSLILLYKYEHLQYLNFLKQNIINPQQDILQSNIYGVEHLLRLIISFPGLLSTTTMDGISLSVLISELESLCRFIGDRLQLYQNNYEFTSPQYDSLARS</sequence>